<reference key="1">
    <citation type="journal article" date="2004" name="Science">
        <title>The Ashbya gossypii genome as a tool for mapping the ancient Saccharomyces cerevisiae genome.</title>
        <authorList>
            <person name="Dietrich F.S."/>
            <person name="Voegeli S."/>
            <person name="Brachat S."/>
            <person name="Lerch A."/>
            <person name="Gates K."/>
            <person name="Steiner S."/>
            <person name="Mohr C."/>
            <person name="Poehlmann R."/>
            <person name="Luedi P."/>
            <person name="Choi S."/>
            <person name="Wing R.A."/>
            <person name="Flavier A."/>
            <person name="Gaffney T.D."/>
            <person name="Philippsen P."/>
        </authorList>
    </citation>
    <scope>NUCLEOTIDE SEQUENCE [LARGE SCALE GENOMIC DNA]</scope>
    <source>
        <strain>ATCC 10895 / CBS 109.51 / FGSC 9923 / NRRL Y-1056</strain>
    </source>
</reference>
<reference key="2">
    <citation type="journal article" date="2013" name="G3 (Bethesda)">
        <title>Genomes of Ashbya fungi isolated from insects reveal four mating-type loci, numerous translocations, lack of transposons, and distinct gene duplications.</title>
        <authorList>
            <person name="Dietrich F.S."/>
            <person name="Voegeli S."/>
            <person name="Kuo S."/>
            <person name="Philippsen P."/>
        </authorList>
    </citation>
    <scope>GENOME REANNOTATION</scope>
    <scope>SEQUENCE REVISION TO 23 AND 145</scope>
    <source>
        <strain>ATCC 10895 / CBS 109.51 / FGSC 9923 / NRRL Y-1056</strain>
    </source>
</reference>
<evidence type="ECO:0000250" key="1"/>
<evidence type="ECO:0000305" key="2"/>
<dbReference type="EMBL" id="AE016817">
    <property type="protein sequence ID" value="AAS51732.2"/>
    <property type="molecule type" value="Genomic_DNA"/>
</dbReference>
<dbReference type="RefSeq" id="NP_983908.2">
    <property type="nucleotide sequence ID" value="NM_209261.2"/>
</dbReference>
<dbReference type="SMR" id="Q75AV8"/>
<dbReference type="FunCoup" id="Q75AV8">
    <property type="interactions" value="1373"/>
</dbReference>
<dbReference type="STRING" id="284811.Q75AV8"/>
<dbReference type="EnsemblFungi" id="AAS51732">
    <property type="protein sequence ID" value="AAS51732"/>
    <property type="gene ID" value="AGOS_ADL188C"/>
</dbReference>
<dbReference type="GeneID" id="4620050"/>
<dbReference type="KEGG" id="ago:AGOS_ADL188C"/>
<dbReference type="eggNOG" id="KOG1670">
    <property type="taxonomic scope" value="Eukaryota"/>
</dbReference>
<dbReference type="HOGENOM" id="CLU_043552_2_2_1"/>
<dbReference type="InParanoid" id="Q75AV8"/>
<dbReference type="OMA" id="EEFWAIV"/>
<dbReference type="OrthoDB" id="590761at2759"/>
<dbReference type="Proteomes" id="UP000000591">
    <property type="component" value="Chromosome IV"/>
</dbReference>
<dbReference type="GO" id="GO:0010494">
    <property type="term" value="C:cytoplasmic stress granule"/>
    <property type="evidence" value="ECO:0007669"/>
    <property type="project" value="EnsemblFungi"/>
</dbReference>
<dbReference type="GO" id="GO:0016281">
    <property type="term" value="C:eukaryotic translation initiation factor 4F complex"/>
    <property type="evidence" value="ECO:0000318"/>
    <property type="project" value="GO_Central"/>
</dbReference>
<dbReference type="GO" id="GO:0005634">
    <property type="term" value="C:nucleus"/>
    <property type="evidence" value="ECO:0007669"/>
    <property type="project" value="EnsemblFungi"/>
</dbReference>
<dbReference type="GO" id="GO:0098808">
    <property type="term" value="F:mRNA cap binding"/>
    <property type="evidence" value="ECO:0007669"/>
    <property type="project" value="EnsemblFungi"/>
</dbReference>
<dbReference type="GO" id="GO:0032266">
    <property type="term" value="F:phosphatidylinositol-3-phosphate binding"/>
    <property type="evidence" value="ECO:0007669"/>
    <property type="project" value="EnsemblFungi"/>
</dbReference>
<dbReference type="GO" id="GO:0000340">
    <property type="term" value="F:RNA 7-methylguanosine cap binding"/>
    <property type="evidence" value="ECO:0000318"/>
    <property type="project" value="GO_Central"/>
</dbReference>
<dbReference type="GO" id="GO:0003743">
    <property type="term" value="F:translation initiation factor activity"/>
    <property type="evidence" value="ECO:0000318"/>
    <property type="project" value="GO_Central"/>
</dbReference>
<dbReference type="GO" id="GO:0000184">
    <property type="term" value="P:nuclear-transcribed mRNA catabolic process, nonsense-mediated decay"/>
    <property type="evidence" value="ECO:0007669"/>
    <property type="project" value="EnsemblFungi"/>
</dbReference>
<dbReference type="GO" id="GO:1901195">
    <property type="term" value="P:positive regulation of formation of translation preinitiation complex"/>
    <property type="evidence" value="ECO:0007669"/>
    <property type="project" value="EnsemblFungi"/>
</dbReference>
<dbReference type="GO" id="GO:0051726">
    <property type="term" value="P:regulation of cell cycle"/>
    <property type="evidence" value="ECO:0007669"/>
    <property type="project" value="EnsemblFungi"/>
</dbReference>
<dbReference type="GO" id="GO:0006413">
    <property type="term" value="P:translational initiation"/>
    <property type="evidence" value="ECO:0000318"/>
    <property type="project" value="GO_Central"/>
</dbReference>
<dbReference type="FunFam" id="3.30.760.10:FF:000011">
    <property type="entry name" value="Eukaryotic translation initiation factor 4E"/>
    <property type="match status" value="1"/>
</dbReference>
<dbReference type="Gene3D" id="3.30.760.10">
    <property type="entry name" value="RNA Cap, Translation Initiation Factor Eif4e"/>
    <property type="match status" value="1"/>
</dbReference>
<dbReference type="InterPro" id="IPR023398">
    <property type="entry name" value="TIF_eIF4e-like"/>
</dbReference>
<dbReference type="InterPro" id="IPR001040">
    <property type="entry name" value="TIF_eIF_4E"/>
</dbReference>
<dbReference type="InterPro" id="IPR019770">
    <property type="entry name" value="TIF_eIF_4E_CS"/>
</dbReference>
<dbReference type="PANTHER" id="PTHR11960">
    <property type="entry name" value="EUKARYOTIC TRANSLATION INITIATION FACTOR 4E RELATED"/>
    <property type="match status" value="1"/>
</dbReference>
<dbReference type="PANTHER" id="PTHR11960:SF8">
    <property type="entry name" value="EUKARYOTIC TRANSLATION INITIATION FACTOR 4E1-RELATED"/>
    <property type="match status" value="1"/>
</dbReference>
<dbReference type="Pfam" id="PF01652">
    <property type="entry name" value="IF4E"/>
    <property type="match status" value="1"/>
</dbReference>
<dbReference type="SUPFAM" id="SSF55418">
    <property type="entry name" value="eIF4e-like"/>
    <property type="match status" value="1"/>
</dbReference>
<dbReference type="PROSITE" id="PS00813">
    <property type="entry name" value="IF4E"/>
    <property type="match status" value="1"/>
</dbReference>
<keyword id="KW-0396">Initiation factor</keyword>
<keyword id="KW-0648">Protein biosynthesis</keyword>
<keyword id="KW-1185">Reference proteome</keyword>
<keyword id="KW-0694">RNA-binding</keyword>
<keyword id="KW-0810">Translation regulation</keyword>
<sequence length="211" mass="24025">MSVEEVTQKAQALSVGDNEERKTVLTDSKDFDLKHPLNSKWTLWYTKPPVGDNESWSDLLRPVTSFTTVEEFWAIQNAIPKPRELPLKSDYHLFRNDIRPEWEDEANSRGGKWSFQFKVRNPPIDDLWLRALLAVIGESIDEDESEINGVVINVRRSGFKIGLWTKSVRQAPLSKVGAKFKAVLQLDDSDTLEFFAHSSANDKNAKPALVL</sequence>
<comment type="function">
    <text evidence="1">Recognizes and binds the 7-methylguanosine-containing mRNA cap during an early step in the initiation of protein synthesis and facilitates ribosome binding by inducing the unwinding of the mRNAs secondary structures.</text>
</comment>
<comment type="subunit">
    <text evidence="1">eIF4F is a multi-subunit complex, the composition of which varies with external and internal environmental conditions. It is composed of at least eIF4A, eIF4E and eIF4G. eIF4E is also known to interact with other partners (By similarity).</text>
</comment>
<comment type="similarity">
    <text evidence="2">Belongs to the eukaryotic initiation factor 4E family.</text>
</comment>
<feature type="chain" id="PRO_0000193648" description="Eukaryotic translation initiation factor 4E">
    <location>
        <begin position="1"/>
        <end position="211"/>
    </location>
</feature>
<accession>Q75AV8</accession>
<gene>
    <name type="primary">TIF45</name>
    <name type="ordered locus">ADL188C</name>
</gene>
<protein>
    <recommendedName>
        <fullName>Eukaryotic translation initiation factor 4E</fullName>
        <shortName>eIF-4E</shortName>
        <shortName>eIF4E</shortName>
    </recommendedName>
    <alternativeName>
        <fullName>eIF-4F 25 kDa subunit</fullName>
    </alternativeName>
    <alternativeName>
        <fullName>mRNA cap-binding protein</fullName>
    </alternativeName>
</protein>
<organism>
    <name type="scientific">Eremothecium gossypii (strain ATCC 10895 / CBS 109.51 / FGSC 9923 / NRRL Y-1056)</name>
    <name type="common">Yeast</name>
    <name type="synonym">Ashbya gossypii</name>
    <dbReference type="NCBI Taxonomy" id="284811"/>
    <lineage>
        <taxon>Eukaryota</taxon>
        <taxon>Fungi</taxon>
        <taxon>Dikarya</taxon>
        <taxon>Ascomycota</taxon>
        <taxon>Saccharomycotina</taxon>
        <taxon>Saccharomycetes</taxon>
        <taxon>Saccharomycetales</taxon>
        <taxon>Saccharomycetaceae</taxon>
        <taxon>Eremothecium</taxon>
    </lineage>
</organism>
<name>IF4E_EREGS</name>
<proteinExistence type="inferred from homology"/>